<keyword id="KW-0167">Capsid protein</keyword>
<keyword id="KW-1185">Reference proteome</keyword>
<keyword id="KW-0118">Viral capsid assembly</keyword>
<keyword id="KW-1171">Viral genome ejection through host cell envelope</keyword>
<keyword id="KW-0231">Viral genome packaging</keyword>
<keyword id="KW-1162">Viral penetration into host cytoplasm</keyword>
<keyword id="KW-1188">Viral release from host cell</keyword>
<keyword id="KW-1244">Viral short tail ejection system</keyword>
<keyword id="KW-0946">Virion</keyword>
<keyword id="KW-1160">Virus entry into host cell</keyword>
<comment type="function">
    <text evidence="1">Forms the portal vertex of the capsid. This portal plays critical roles in head assembly, genome packaging, neck/tail attachment, and genome ejection. The portal protein multimerizes as a single ring-shaped homododecamer arranged around a central channel.</text>
</comment>
<comment type="subunit">
    <text evidence="1">Homododecamer.</text>
</comment>
<comment type="subcellular location">
    <subcellularLocation>
        <location evidence="1">Virion</location>
    </subcellularLocation>
</comment>
<comment type="similarity">
    <text evidence="3">Belongs to the podoviridae head-to-tail connector protein family.</text>
</comment>
<name>PORTL_BPE15</name>
<sequence>MAETEKERLLKQLAQLKNERTSFESHWLDLSDFINPRGSRFLTSDVNRDDRRNTKIVDPTGSMAQRILSSGMMSGITSPARPWFKLATPDPDMMDYGPVKIWLEVVQRRMNEVFNKSNLYQSLPVMYASLGTFGTGAMAVMEDDQDVIRTMPFPIGSYYLANSPRGSVDTCIRQFSMTVRQMVQEFGLDNVSTSVKGMWENGTYETWVEVNHCITPNVNRDSGKMDSKNKPYRSVYFESGGDSDKLLRESGFDEFPILAPRWEVNGEDVYASSCPGMLALGQVKALQVEQKRKAQLIDKATNPPMVAPTSLKNQRVSLLPGDVTYLDVISGQDGFKPAYLVNPNTADLLADIQDTRQTINSAYFVDLFMMLQNINTRSMPVEAVIEMKEEKLLMLGPVLERLNDEALNPLIDRVFSIMARKNMLPEPPDVLQGMPLRIEYISVMAQAQKSIGLTSLSQTVGFIGQLAQFKPEALDKLDVDQAIDAFSEMSGVSPTVIVPQEQVQGIREERAKQAQAAQAMAMGQAAAQGAKTLSETQTSDPSALTAIANAAGAPQQ</sequence>
<feature type="chain" id="PRO_0000432545" description="Portal protein">
    <location>
        <begin position="1"/>
        <end position="556"/>
    </location>
</feature>
<feature type="region of interest" description="Disordered" evidence="2">
    <location>
        <begin position="527"/>
        <end position="556"/>
    </location>
</feature>
<feature type="compositionally biased region" description="Polar residues" evidence="2">
    <location>
        <begin position="533"/>
        <end position="542"/>
    </location>
</feature>
<dbReference type="EMBL" id="AY150271">
    <property type="protein sequence ID" value="AAO06067.1"/>
    <property type="molecule type" value="Genomic_DNA"/>
</dbReference>
<dbReference type="RefSeq" id="NP_848212.1">
    <property type="nucleotide sequence ID" value="NC_004775.2"/>
</dbReference>
<dbReference type="SMR" id="Q858H1"/>
<dbReference type="GeneID" id="2641872"/>
<dbReference type="KEGG" id="vg:2641872"/>
<dbReference type="OrthoDB" id="1789at10239"/>
<dbReference type="Proteomes" id="UP000001770">
    <property type="component" value="Genome"/>
</dbReference>
<dbReference type="GO" id="GO:0019028">
    <property type="term" value="C:viral capsid"/>
    <property type="evidence" value="ECO:0007669"/>
    <property type="project" value="UniProtKB-KW"/>
</dbReference>
<dbReference type="GO" id="GO:0099002">
    <property type="term" value="P:symbiont genome ejection through host cell envelope, short tail mechanism"/>
    <property type="evidence" value="ECO:0007669"/>
    <property type="project" value="UniProtKB-KW"/>
</dbReference>
<dbReference type="InterPro" id="IPR020991">
    <property type="entry name" value="Connector_podovirus"/>
</dbReference>
<dbReference type="Pfam" id="PF12236">
    <property type="entry name" value="Head-tail_con"/>
    <property type="match status" value="1"/>
</dbReference>
<reference key="1">
    <citation type="journal article" date="2007" name="Virology">
        <title>The genome of epsilon15, a serotype-converting, Group E1 Salmonella enterica-specific bacteriophage.</title>
        <authorList>
            <person name="Kropinski A.M."/>
            <person name="Kovalyova I.V."/>
            <person name="Billington S.J."/>
            <person name="Patrick A.N."/>
            <person name="Butts B.D."/>
            <person name="Guichard J.A."/>
            <person name="Pitcher T.J."/>
            <person name="Guthrie C.C."/>
            <person name="Sydlaske A.D."/>
            <person name="Barnhill L.M."/>
            <person name="Havens K.A."/>
            <person name="Day K.R."/>
            <person name="Falk D.R."/>
            <person name="McConnell M.R."/>
        </authorList>
    </citation>
    <scope>NUCLEOTIDE SEQUENCE [GENOMIC DNA]</scope>
</reference>
<evidence type="ECO:0000250" key="1">
    <source>
        <dbReference type="UniProtKB" id="P03728"/>
    </source>
</evidence>
<evidence type="ECO:0000256" key="2">
    <source>
        <dbReference type="SAM" id="MobiDB-lite"/>
    </source>
</evidence>
<evidence type="ECO:0000305" key="3"/>
<evidence type="ECO:0000312" key="4">
    <source>
        <dbReference type="Proteomes" id="UP000001770"/>
    </source>
</evidence>
<proteinExistence type="inferred from homology"/>
<accession>Q858H1</accession>
<organism evidence="4">
    <name type="scientific">Salmonella phage epsilon15</name>
    <dbReference type="NCBI Taxonomy" id="215158"/>
    <lineage>
        <taxon>Viruses</taxon>
        <taxon>Duplodnaviria</taxon>
        <taxon>Heunggongvirae</taxon>
        <taxon>Uroviricota</taxon>
        <taxon>Caudoviricetes</taxon>
        <taxon>Uetakevirus</taxon>
        <taxon>Uetakevirus epsilon15</taxon>
    </lineage>
</organism>
<protein>
    <recommendedName>
        <fullName evidence="3">Portal protein</fullName>
    </recommendedName>
    <alternativeName>
        <fullName evidence="3">Head-to-tail connector</fullName>
    </alternativeName>
</protein>
<organismHost>
    <name type="scientific">Salmonella anatum</name>
    <dbReference type="NCBI Taxonomy" id="58712"/>
</organismHost>